<organism>
    <name type="scientific">Actinobacillus succinogenes (strain ATCC 55618 / DSM 22257 / CCUG 43843 / 130Z)</name>
    <dbReference type="NCBI Taxonomy" id="339671"/>
    <lineage>
        <taxon>Bacteria</taxon>
        <taxon>Pseudomonadati</taxon>
        <taxon>Pseudomonadota</taxon>
        <taxon>Gammaproteobacteria</taxon>
        <taxon>Pasteurellales</taxon>
        <taxon>Pasteurellaceae</taxon>
        <taxon>Actinobacillus</taxon>
    </lineage>
</organism>
<reference key="1">
    <citation type="journal article" date="2010" name="BMC Genomics">
        <title>A genomic perspective on the potential of Actinobacillus succinogenes for industrial succinate production.</title>
        <authorList>
            <person name="McKinlay J.B."/>
            <person name="Laivenieks M."/>
            <person name="Schindler B.D."/>
            <person name="McKinlay A.A."/>
            <person name="Siddaramappa S."/>
            <person name="Challacombe J.F."/>
            <person name="Lowry S.R."/>
            <person name="Clum A."/>
            <person name="Lapidus A.L."/>
            <person name="Burkhart K.B."/>
            <person name="Harkins V."/>
            <person name="Vieille C."/>
        </authorList>
    </citation>
    <scope>NUCLEOTIDE SEQUENCE [LARGE SCALE GENOMIC DNA]</scope>
    <source>
        <strain>ATCC 55618 / DSM 22257 / CCUG 43843 / 130Z</strain>
    </source>
</reference>
<keyword id="KW-0067">ATP-binding</keyword>
<keyword id="KW-0963">Cytoplasm</keyword>
<keyword id="KW-0347">Helicase</keyword>
<keyword id="KW-0378">Hydrolase</keyword>
<keyword id="KW-0547">Nucleotide-binding</keyword>
<keyword id="KW-1185">Reference proteome</keyword>
<keyword id="KW-0694">RNA-binding</keyword>
<gene>
    <name evidence="1" type="primary">rhlB</name>
    <name type="ordered locus">Asuc_0039</name>
</gene>
<feature type="chain" id="PRO_1000082833" description="ATP-dependent RNA helicase RhlB">
    <location>
        <begin position="1"/>
        <end position="413"/>
    </location>
</feature>
<feature type="domain" description="Helicase ATP-binding" evidence="1">
    <location>
        <begin position="40"/>
        <end position="217"/>
    </location>
</feature>
<feature type="domain" description="Helicase C-terminal" evidence="1">
    <location>
        <begin position="241"/>
        <end position="388"/>
    </location>
</feature>
<feature type="short sequence motif" description="Q motif">
    <location>
        <begin position="9"/>
        <end position="37"/>
    </location>
</feature>
<feature type="short sequence motif" description="DEAD box">
    <location>
        <begin position="163"/>
        <end position="166"/>
    </location>
</feature>
<feature type="binding site" evidence="1">
    <location>
        <begin position="53"/>
        <end position="60"/>
    </location>
    <ligand>
        <name>ATP</name>
        <dbReference type="ChEBI" id="CHEBI:30616"/>
    </ligand>
</feature>
<accession>A6VKC3</accession>
<name>RHLB_ACTSZ</name>
<comment type="function">
    <text evidence="1">DEAD-box RNA helicase involved in RNA degradation. Has RNA-dependent ATPase activity and unwinds double-stranded RNA.</text>
</comment>
<comment type="catalytic activity">
    <reaction evidence="1">
        <text>ATP + H2O = ADP + phosphate + H(+)</text>
        <dbReference type="Rhea" id="RHEA:13065"/>
        <dbReference type="ChEBI" id="CHEBI:15377"/>
        <dbReference type="ChEBI" id="CHEBI:15378"/>
        <dbReference type="ChEBI" id="CHEBI:30616"/>
        <dbReference type="ChEBI" id="CHEBI:43474"/>
        <dbReference type="ChEBI" id="CHEBI:456216"/>
        <dbReference type="EC" id="3.6.4.13"/>
    </reaction>
</comment>
<comment type="subunit">
    <text evidence="1">Component of the RNA degradosome, which is a multiprotein complex involved in RNA processing and mRNA degradation.</text>
</comment>
<comment type="subcellular location">
    <subcellularLocation>
        <location evidence="1">Cytoplasm</location>
    </subcellularLocation>
</comment>
<comment type="similarity">
    <text evidence="1">Belongs to the DEAD box helicase family. RhlB subfamily.</text>
</comment>
<evidence type="ECO:0000255" key="1">
    <source>
        <dbReference type="HAMAP-Rule" id="MF_00661"/>
    </source>
</evidence>
<sequence length="413" mass="46887">MTTEHLSQQRFADLPLHPQILAALNDQNFEYCTPIQALSLPLTLQGKDVAGQAQTGTGKTMAFLTATFHHLLTHQPDFITNQPRALILAPTRELAVQIAHDAESLAQTTKLRIALAYGGDGYDKQLKTIENGVDILIGTTGRVIDYVKQGIIRFNDIQVVVLDEADRMFDLGFIKDIRYLLRKCPAPKSRLTMLFSATLSYKVRELAFEDMNDPEYIEIEPLQKTGHRIKEELFYPSNRDKMALLMTLLEEEWPERCIIFANTKHRCEEIWGYLAADGQRVGLLTGDVAQKKRLALLKQFTDGELDILVATDVAARGLHIPDVTHVFNYDLPDDREDYVHRIGRTGRAGESGMSISFACEQYAMNLPAIEEYIGHHIPVSQYDPDSLINDLPKPYRIKRNHTIPHSSRDYKKR</sequence>
<protein>
    <recommendedName>
        <fullName evidence="1">ATP-dependent RNA helicase RhlB</fullName>
        <ecNumber evidence="1">3.6.4.13</ecNumber>
    </recommendedName>
</protein>
<proteinExistence type="inferred from homology"/>
<dbReference type="EC" id="3.6.4.13" evidence="1"/>
<dbReference type="EMBL" id="CP000746">
    <property type="protein sequence ID" value="ABR73420.1"/>
    <property type="molecule type" value="Genomic_DNA"/>
</dbReference>
<dbReference type="RefSeq" id="WP_011978696.1">
    <property type="nucleotide sequence ID" value="NC_009655.1"/>
</dbReference>
<dbReference type="SMR" id="A6VKC3"/>
<dbReference type="STRING" id="339671.Asuc_0039"/>
<dbReference type="KEGG" id="asu:Asuc_0039"/>
<dbReference type="eggNOG" id="COG0513">
    <property type="taxonomic scope" value="Bacteria"/>
</dbReference>
<dbReference type="HOGENOM" id="CLU_003041_1_3_6"/>
<dbReference type="OrthoDB" id="9805696at2"/>
<dbReference type="Proteomes" id="UP000001114">
    <property type="component" value="Chromosome"/>
</dbReference>
<dbReference type="GO" id="GO:0005829">
    <property type="term" value="C:cytosol"/>
    <property type="evidence" value="ECO:0007669"/>
    <property type="project" value="TreeGrafter"/>
</dbReference>
<dbReference type="GO" id="GO:0005524">
    <property type="term" value="F:ATP binding"/>
    <property type="evidence" value="ECO:0007669"/>
    <property type="project" value="UniProtKB-UniRule"/>
</dbReference>
<dbReference type="GO" id="GO:0016887">
    <property type="term" value="F:ATP hydrolysis activity"/>
    <property type="evidence" value="ECO:0007669"/>
    <property type="project" value="RHEA"/>
</dbReference>
<dbReference type="GO" id="GO:0003723">
    <property type="term" value="F:RNA binding"/>
    <property type="evidence" value="ECO:0007669"/>
    <property type="project" value="UniProtKB-UniRule"/>
</dbReference>
<dbReference type="GO" id="GO:0003724">
    <property type="term" value="F:RNA helicase activity"/>
    <property type="evidence" value="ECO:0007669"/>
    <property type="project" value="UniProtKB-UniRule"/>
</dbReference>
<dbReference type="GO" id="GO:0006401">
    <property type="term" value="P:RNA catabolic process"/>
    <property type="evidence" value="ECO:0007669"/>
    <property type="project" value="UniProtKB-UniRule"/>
</dbReference>
<dbReference type="CDD" id="cd00268">
    <property type="entry name" value="DEADc"/>
    <property type="match status" value="1"/>
</dbReference>
<dbReference type="CDD" id="cd18787">
    <property type="entry name" value="SF2_C_DEAD"/>
    <property type="match status" value="1"/>
</dbReference>
<dbReference type="FunFam" id="3.40.50.300:FF:000312">
    <property type="entry name" value="ATP-dependent RNA helicase RhlB"/>
    <property type="match status" value="1"/>
</dbReference>
<dbReference type="Gene3D" id="3.40.50.300">
    <property type="entry name" value="P-loop containing nucleotide triphosphate hydrolases"/>
    <property type="match status" value="2"/>
</dbReference>
<dbReference type="HAMAP" id="MF_00661">
    <property type="entry name" value="DEAD_helicase_RhlB"/>
    <property type="match status" value="1"/>
</dbReference>
<dbReference type="InterPro" id="IPR011545">
    <property type="entry name" value="DEAD/DEAH_box_helicase_dom"/>
</dbReference>
<dbReference type="InterPro" id="IPR050079">
    <property type="entry name" value="DEAD_box_RNA_helicase"/>
</dbReference>
<dbReference type="InterPro" id="IPR014001">
    <property type="entry name" value="Helicase_ATP-bd"/>
</dbReference>
<dbReference type="InterPro" id="IPR001650">
    <property type="entry name" value="Helicase_C-like"/>
</dbReference>
<dbReference type="InterPro" id="IPR027417">
    <property type="entry name" value="P-loop_NTPase"/>
</dbReference>
<dbReference type="InterPro" id="IPR000629">
    <property type="entry name" value="RNA-helicase_DEAD-box_CS"/>
</dbReference>
<dbReference type="InterPro" id="IPR023554">
    <property type="entry name" value="RNA_helicase_ATP-dep_RhlB"/>
</dbReference>
<dbReference type="InterPro" id="IPR014014">
    <property type="entry name" value="RNA_helicase_DEAD_Q_motif"/>
</dbReference>
<dbReference type="NCBIfam" id="NF003419">
    <property type="entry name" value="PRK04837.1"/>
    <property type="match status" value="1"/>
</dbReference>
<dbReference type="PANTHER" id="PTHR47959:SF10">
    <property type="entry name" value="ATP-DEPENDENT RNA HELICASE RHLB"/>
    <property type="match status" value="1"/>
</dbReference>
<dbReference type="PANTHER" id="PTHR47959">
    <property type="entry name" value="ATP-DEPENDENT RNA HELICASE RHLE-RELATED"/>
    <property type="match status" value="1"/>
</dbReference>
<dbReference type="Pfam" id="PF00270">
    <property type="entry name" value="DEAD"/>
    <property type="match status" value="1"/>
</dbReference>
<dbReference type="Pfam" id="PF00271">
    <property type="entry name" value="Helicase_C"/>
    <property type="match status" value="1"/>
</dbReference>
<dbReference type="SMART" id="SM00487">
    <property type="entry name" value="DEXDc"/>
    <property type="match status" value="1"/>
</dbReference>
<dbReference type="SMART" id="SM00490">
    <property type="entry name" value="HELICc"/>
    <property type="match status" value="1"/>
</dbReference>
<dbReference type="SUPFAM" id="SSF52540">
    <property type="entry name" value="P-loop containing nucleoside triphosphate hydrolases"/>
    <property type="match status" value="1"/>
</dbReference>
<dbReference type="PROSITE" id="PS00039">
    <property type="entry name" value="DEAD_ATP_HELICASE"/>
    <property type="match status" value="1"/>
</dbReference>
<dbReference type="PROSITE" id="PS51192">
    <property type="entry name" value="HELICASE_ATP_BIND_1"/>
    <property type="match status" value="1"/>
</dbReference>
<dbReference type="PROSITE" id="PS51194">
    <property type="entry name" value="HELICASE_CTER"/>
    <property type="match status" value="1"/>
</dbReference>
<dbReference type="PROSITE" id="PS51195">
    <property type="entry name" value="Q_MOTIF"/>
    <property type="match status" value="1"/>
</dbReference>